<sequence length="554" mass="61366">MTTSTPDIQPAVQHTAQVAIVGAGPVGLMMANYLGQMGISVLVVEKLATLIDYPRAIGIDDESLRAMQAVGLVNDVLPHTTPWHAMRFLTPKGRCFADIQPMTDEFGWSRRNAFIQPQVDAVMYHGLQRFPQVRCLFSREVGAFSQTGDSVTLNLKGPDGERETVRADWLVACDGGASFIRRTLNIPFEGKTAPNQWIVIDIANDPLATPHVYLCCDPVRPYVSAALPHGVRRFEFMVMPGETEAQLSEPHNMRRLLSKVLPDPDRVELIRQRVYTHNARLAERFRINRVLLAGDAAHIMPVWQGQGYNSGMRDAFNLAWKLALVVNGKAGEALLDSYQQERRDHAKAMIDLSVTAGHVLAPPKRWQGAVRDGLSWLLNYLPPVKRYFLEMRFKPMPQYREGALLTDGAGKTSPVGKMFIQPQVTLESGESVLLDEVIGANFAIIGWGCNPQWGLNAGQIARWRAIGVRFIQVVPEVQIHREQDNAPGTLRVGDTQNRLKSWFALHNTAIAVVRPDRFVAALAIPQTLGAQLTALAEKMTLATGDTAHAEEKVA</sequence>
<evidence type="ECO:0000255" key="1">
    <source>
        <dbReference type="HAMAP-Rule" id="MF_01652"/>
    </source>
</evidence>
<keyword id="KW-0058">Aromatic hydrocarbons catabolism</keyword>
<keyword id="KW-0274">FAD</keyword>
<keyword id="KW-0285">Flavoprotein</keyword>
<keyword id="KW-0520">NAD</keyword>
<keyword id="KW-0560">Oxidoreductase</keyword>
<reference key="1">
    <citation type="submission" date="2006-09" db="EMBL/GenBank/DDBJ databases">
        <authorList>
            <consortium name="The Klebsiella pneumonia Genome Sequencing Project"/>
            <person name="McClelland M."/>
            <person name="Sanderson E.K."/>
            <person name="Spieth J."/>
            <person name="Clifton W.S."/>
            <person name="Latreille P."/>
            <person name="Sabo A."/>
            <person name="Pepin K."/>
            <person name="Bhonagiri V."/>
            <person name="Porwollik S."/>
            <person name="Ali J."/>
            <person name="Wilson R.K."/>
        </authorList>
    </citation>
    <scope>NUCLEOTIDE SEQUENCE [LARGE SCALE GENOMIC DNA]</scope>
    <source>
        <strain>ATCC 700721 / MGH 78578</strain>
    </source>
</reference>
<gene>
    <name evidence="1" type="primary">mhpA</name>
    <name type="ordered locus">KPN78578_20890</name>
    <name type="ORF">KPN_02122</name>
</gene>
<protein>
    <recommendedName>
        <fullName evidence="1">3-(3-hydroxy-phenyl)propionate/3-hydroxycinnamic acid hydroxylase</fullName>
        <shortName evidence="1">3-HCI hydroxylase</shortName>
        <shortName evidence="1">3-HPP hydroxylase</shortName>
        <ecNumber evidence="1">1.14.13.127</ecNumber>
    </recommendedName>
</protein>
<comment type="function">
    <text evidence="1">Catalyzes the insertion of one atom of molecular oxygen into position 2 of the phenyl ring of 3-(3-hydroxyphenyl)propionate (3-HPP) and hydroxycinnamic acid (3HCI).</text>
</comment>
<comment type="catalytic activity">
    <reaction evidence="1">
        <text>3-(3-hydroxyphenyl)propanoate + NADH + O2 + H(+) = 3-(2,3-dihydroxyphenyl)propanoate + NAD(+) + H2O</text>
        <dbReference type="Rhea" id="RHEA:24785"/>
        <dbReference type="ChEBI" id="CHEBI:15377"/>
        <dbReference type="ChEBI" id="CHEBI:15378"/>
        <dbReference type="ChEBI" id="CHEBI:15379"/>
        <dbReference type="ChEBI" id="CHEBI:46951"/>
        <dbReference type="ChEBI" id="CHEBI:57277"/>
        <dbReference type="ChEBI" id="CHEBI:57540"/>
        <dbReference type="ChEBI" id="CHEBI:57945"/>
        <dbReference type="EC" id="1.14.13.127"/>
    </reaction>
</comment>
<comment type="catalytic activity">
    <reaction evidence="1">
        <text>(2E)-3-(3-hydroxyphenyl)prop-2-enoate + NADH + O2 + H(+) = (2E)-3-(2,3-dihydroxyphenyl)prop-2-enoate + NAD(+) + H2O</text>
        <dbReference type="Rhea" id="RHEA:27846"/>
        <dbReference type="ChEBI" id="CHEBI:15377"/>
        <dbReference type="ChEBI" id="CHEBI:15378"/>
        <dbReference type="ChEBI" id="CHEBI:15379"/>
        <dbReference type="ChEBI" id="CHEBI:47928"/>
        <dbReference type="ChEBI" id="CHEBI:57540"/>
        <dbReference type="ChEBI" id="CHEBI:57945"/>
        <dbReference type="ChEBI" id="CHEBI:58642"/>
        <dbReference type="EC" id="1.14.13.127"/>
    </reaction>
</comment>
<comment type="cofactor">
    <cofactor evidence="1">
        <name>FAD</name>
        <dbReference type="ChEBI" id="CHEBI:57692"/>
    </cofactor>
</comment>
<comment type="pathway">
    <text evidence="1">Aromatic compound metabolism; 3-phenylpropanoate degradation.</text>
</comment>
<comment type="similarity">
    <text evidence="1">Belongs to the PheA/TfdB FAD monooxygenase family.</text>
</comment>
<organism>
    <name type="scientific">Klebsiella pneumoniae subsp. pneumoniae (strain ATCC 700721 / MGH 78578)</name>
    <dbReference type="NCBI Taxonomy" id="272620"/>
    <lineage>
        <taxon>Bacteria</taxon>
        <taxon>Pseudomonadati</taxon>
        <taxon>Pseudomonadota</taxon>
        <taxon>Gammaproteobacteria</taxon>
        <taxon>Enterobacterales</taxon>
        <taxon>Enterobacteriaceae</taxon>
        <taxon>Klebsiella/Raoultella group</taxon>
        <taxon>Klebsiella</taxon>
        <taxon>Klebsiella pneumoniae complex</taxon>
    </lineage>
</organism>
<name>MHPA_KLEP7</name>
<dbReference type="EC" id="1.14.13.127" evidence="1"/>
<dbReference type="EMBL" id="CP000647">
    <property type="protein sequence ID" value="ABR77550.1"/>
    <property type="molecule type" value="Genomic_DNA"/>
</dbReference>
<dbReference type="RefSeq" id="WP_015958583.1">
    <property type="nucleotide sequence ID" value="NC_009648.1"/>
</dbReference>
<dbReference type="SMR" id="A6TAC9"/>
<dbReference type="STRING" id="272620.KPN_02122"/>
<dbReference type="PaxDb" id="272620-KPN_02122"/>
<dbReference type="EnsemblBacteria" id="ABR77550">
    <property type="protein sequence ID" value="ABR77550"/>
    <property type="gene ID" value="KPN_02122"/>
</dbReference>
<dbReference type="KEGG" id="kpn:KPN_02122"/>
<dbReference type="HOGENOM" id="CLU_009665_20_2_6"/>
<dbReference type="UniPathway" id="UPA00714"/>
<dbReference type="Proteomes" id="UP000000265">
    <property type="component" value="Chromosome"/>
</dbReference>
<dbReference type="GO" id="GO:0008688">
    <property type="term" value="F:3-(3-hydroxyphenyl)propionate hydroxylase activity"/>
    <property type="evidence" value="ECO:0007669"/>
    <property type="project" value="UniProtKB-UniRule"/>
</dbReference>
<dbReference type="GO" id="GO:0071949">
    <property type="term" value="F:FAD binding"/>
    <property type="evidence" value="ECO:0007669"/>
    <property type="project" value="InterPro"/>
</dbReference>
<dbReference type="GO" id="GO:0019622">
    <property type="term" value="P:3-(3-hydroxy)phenylpropionate catabolic process"/>
    <property type="evidence" value="ECO:0007669"/>
    <property type="project" value="UniProtKB-UniRule"/>
</dbReference>
<dbReference type="GO" id="GO:0019380">
    <property type="term" value="P:3-phenylpropionate catabolic process"/>
    <property type="evidence" value="ECO:0007669"/>
    <property type="project" value="UniProtKB-UniPathway"/>
</dbReference>
<dbReference type="FunFam" id="3.50.50.60:FF:000126">
    <property type="entry name" value="3-(3-hydroxy-phenyl)propionate/3-hydroxycinnamic acid hydroxylase"/>
    <property type="match status" value="1"/>
</dbReference>
<dbReference type="Gene3D" id="3.30.70.2450">
    <property type="match status" value="1"/>
</dbReference>
<dbReference type="Gene3D" id="3.50.50.60">
    <property type="entry name" value="FAD/NAD(P)-binding domain"/>
    <property type="match status" value="1"/>
</dbReference>
<dbReference type="HAMAP" id="MF_01652">
    <property type="entry name" value="MhpA"/>
    <property type="match status" value="1"/>
</dbReference>
<dbReference type="InterPro" id="IPR023786">
    <property type="entry name" value="3-HPP/3HCI_hydroxylase"/>
</dbReference>
<dbReference type="InterPro" id="IPR002938">
    <property type="entry name" value="FAD-bd"/>
</dbReference>
<dbReference type="InterPro" id="IPR036188">
    <property type="entry name" value="FAD/NAD-bd_sf"/>
</dbReference>
<dbReference type="InterPro" id="IPR050631">
    <property type="entry name" value="PheA/TfdB_FAD_monoxygenase"/>
</dbReference>
<dbReference type="NCBIfam" id="NF004827">
    <property type="entry name" value="PRK06183.1-1"/>
    <property type="match status" value="1"/>
</dbReference>
<dbReference type="NCBIfam" id="NF004829">
    <property type="entry name" value="PRK06183.1-3"/>
    <property type="match status" value="1"/>
</dbReference>
<dbReference type="NCBIfam" id="NF004831">
    <property type="entry name" value="PRK06183.1-5"/>
    <property type="match status" value="1"/>
</dbReference>
<dbReference type="PANTHER" id="PTHR43476">
    <property type="entry name" value="3-(3-HYDROXY-PHENYL)PROPIONATE/3-HYDROXYCINNAMIC ACID HYDROXYLASE"/>
    <property type="match status" value="1"/>
</dbReference>
<dbReference type="PANTHER" id="PTHR43476:SF3">
    <property type="entry name" value="FAD-BINDING MONOOXYGENASE"/>
    <property type="match status" value="1"/>
</dbReference>
<dbReference type="Pfam" id="PF01494">
    <property type="entry name" value="FAD_binding_3"/>
    <property type="match status" value="1"/>
</dbReference>
<dbReference type="PRINTS" id="PR00420">
    <property type="entry name" value="RNGMNOXGNASE"/>
</dbReference>
<dbReference type="SUPFAM" id="SSF51905">
    <property type="entry name" value="FAD/NAD(P)-binding domain"/>
    <property type="match status" value="1"/>
</dbReference>
<accession>A6TAC9</accession>
<feature type="chain" id="PRO_0000337633" description="3-(3-hydroxy-phenyl)propionate/3-hydroxycinnamic acid hydroxylase">
    <location>
        <begin position="1"/>
        <end position="554"/>
    </location>
</feature>
<feature type="binding site" evidence="1">
    <location>
        <begin position="17"/>
        <end position="46"/>
    </location>
    <ligand>
        <name>FAD</name>
        <dbReference type="ChEBI" id="CHEBI:57692"/>
    </ligand>
</feature>
<feature type="binding site" evidence="1">
    <location>
        <begin position="285"/>
        <end position="295"/>
    </location>
    <ligand>
        <name>FAD</name>
        <dbReference type="ChEBI" id="CHEBI:57692"/>
    </ligand>
</feature>
<proteinExistence type="inferred from homology"/>